<keyword id="KW-0963">Cytoplasm</keyword>
<keyword id="KW-0456">Lyase</keyword>
<keyword id="KW-0704">Schiff base</keyword>
<gene>
    <name evidence="1" type="primary">deoC</name>
    <name type="ordered locus">UUR10_0689</name>
</gene>
<name>DEOC_UREU1</name>
<reference key="1">
    <citation type="submission" date="2008-10" db="EMBL/GenBank/DDBJ databases">
        <title>Genome sequence of Ureaplasma urealyticum serovar 10 ATCC-33699.</title>
        <authorList>
            <person name="Shrivastava S."/>
            <person name="Methe B.A."/>
            <person name="Glass J."/>
            <person name="White K."/>
            <person name="Duffy L.B."/>
        </authorList>
    </citation>
    <scope>NUCLEOTIDE SEQUENCE [LARGE SCALE GENOMIC DNA]</scope>
    <source>
        <strain>ATCC 33699 / Western</strain>
    </source>
</reference>
<dbReference type="EC" id="4.1.2.4" evidence="1"/>
<dbReference type="EMBL" id="CP001184">
    <property type="protein sequence ID" value="ACI59746.1"/>
    <property type="molecule type" value="Genomic_DNA"/>
</dbReference>
<dbReference type="RefSeq" id="WP_012560186.1">
    <property type="nucleotide sequence ID" value="NC_011374.1"/>
</dbReference>
<dbReference type="SMR" id="B5ZCA0"/>
<dbReference type="STRING" id="565575.UUR10_0689"/>
<dbReference type="KEGG" id="uue:UUR10_0689"/>
<dbReference type="eggNOG" id="COG0274">
    <property type="taxonomic scope" value="Bacteria"/>
</dbReference>
<dbReference type="HOGENOM" id="CLU_053595_0_1_14"/>
<dbReference type="OrthoDB" id="9778711at2"/>
<dbReference type="UniPathway" id="UPA00002">
    <property type="reaction ID" value="UER00468"/>
</dbReference>
<dbReference type="Proteomes" id="UP000002018">
    <property type="component" value="Chromosome"/>
</dbReference>
<dbReference type="GO" id="GO:0005737">
    <property type="term" value="C:cytoplasm"/>
    <property type="evidence" value="ECO:0007669"/>
    <property type="project" value="UniProtKB-SubCell"/>
</dbReference>
<dbReference type="GO" id="GO:0004139">
    <property type="term" value="F:deoxyribose-phosphate aldolase activity"/>
    <property type="evidence" value="ECO:0007669"/>
    <property type="project" value="UniProtKB-UniRule"/>
</dbReference>
<dbReference type="GO" id="GO:0006018">
    <property type="term" value="P:2-deoxyribose 1-phosphate catabolic process"/>
    <property type="evidence" value="ECO:0007669"/>
    <property type="project" value="UniProtKB-UniRule"/>
</dbReference>
<dbReference type="GO" id="GO:0016052">
    <property type="term" value="P:carbohydrate catabolic process"/>
    <property type="evidence" value="ECO:0007669"/>
    <property type="project" value="TreeGrafter"/>
</dbReference>
<dbReference type="GO" id="GO:0009264">
    <property type="term" value="P:deoxyribonucleotide catabolic process"/>
    <property type="evidence" value="ECO:0007669"/>
    <property type="project" value="InterPro"/>
</dbReference>
<dbReference type="CDD" id="cd00959">
    <property type="entry name" value="DeoC"/>
    <property type="match status" value="1"/>
</dbReference>
<dbReference type="FunFam" id="3.20.20.70:FF:000044">
    <property type="entry name" value="Deoxyribose-phosphate aldolase"/>
    <property type="match status" value="1"/>
</dbReference>
<dbReference type="Gene3D" id="3.20.20.70">
    <property type="entry name" value="Aldolase class I"/>
    <property type="match status" value="1"/>
</dbReference>
<dbReference type="HAMAP" id="MF_00114">
    <property type="entry name" value="DeoC_type1"/>
    <property type="match status" value="1"/>
</dbReference>
<dbReference type="InterPro" id="IPR013785">
    <property type="entry name" value="Aldolase_TIM"/>
</dbReference>
<dbReference type="InterPro" id="IPR011343">
    <property type="entry name" value="DeoC"/>
</dbReference>
<dbReference type="InterPro" id="IPR002915">
    <property type="entry name" value="DeoC/FbaB/LacD_aldolase"/>
</dbReference>
<dbReference type="InterPro" id="IPR028581">
    <property type="entry name" value="DeoC_typeI"/>
</dbReference>
<dbReference type="NCBIfam" id="TIGR00126">
    <property type="entry name" value="deoC"/>
    <property type="match status" value="1"/>
</dbReference>
<dbReference type="PANTHER" id="PTHR10889">
    <property type="entry name" value="DEOXYRIBOSE-PHOSPHATE ALDOLASE"/>
    <property type="match status" value="1"/>
</dbReference>
<dbReference type="PANTHER" id="PTHR10889:SF1">
    <property type="entry name" value="DEOXYRIBOSE-PHOSPHATE ALDOLASE"/>
    <property type="match status" value="1"/>
</dbReference>
<dbReference type="Pfam" id="PF01791">
    <property type="entry name" value="DeoC"/>
    <property type="match status" value="1"/>
</dbReference>
<dbReference type="PIRSF" id="PIRSF001357">
    <property type="entry name" value="DeoC"/>
    <property type="match status" value="1"/>
</dbReference>
<dbReference type="SMART" id="SM01133">
    <property type="entry name" value="DeoC"/>
    <property type="match status" value="1"/>
</dbReference>
<dbReference type="SUPFAM" id="SSF51569">
    <property type="entry name" value="Aldolase"/>
    <property type="match status" value="1"/>
</dbReference>
<organism>
    <name type="scientific">Ureaplasma urealyticum serovar 10 (strain ATCC 33699 / Western)</name>
    <dbReference type="NCBI Taxonomy" id="565575"/>
    <lineage>
        <taxon>Bacteria</taxon>
        <taxon>Bacillati</taxon>
        <taxon>Mycoplasmatota</taxon>
        <taxon>Mycoplasmoidales</taxon>
        <taxon>Mycoplasmoidaceae</taxon>
        <taxon>Ureaplasma</taxon>
    </lineage>
</organism>
<sequence>MNKYSIYVDHTLLKPDASLDEIHNLCEEAEENEFYSVCINPCFIKVAKHYLLETPVKICTVVGFPLGANTTETKVFETRNAIALGADEIDMVININQLKSANREYCLQEINEVKKACSDKVLKVIVETALLDQEQKEFAARIILESDADFIKTSTGFAKEGAKLEDIILWKQILGDAKQIKAAGGIKNLDDFKAFIDAGATRIGTSSAIKILNNQ</sequence>
<proteinExistence type="inferred from homology"/>
<protein>
    <recommendedName>
        <fullName evidence="1">Deoxyribose-phosphate aldolase</fullName>
        <shortName evidence="1">DERA</shortName>
        <ecNumber evidence="1">4.1.2.4</ecNumber>
    </recommendedName>
    <alternativeName>
        <fullName evidence="1">2-deoxy-D-ribose 5-phosphate aldolase</fullName>
    </alternativeName>
    <alternativeName>
        <fullName evidence="1">Phosphodeoxyriboaldolase</fullName>
        <shortName evidence="1">Deoxyriboaldolase</shortName>
    </alternativeName>
</protein>
<comment type="function">
    <text evidence="1">Catalyzes a reversible aldol reaction between acetaldehyde and D-glyceraldehyde 3-phosphate to generate 2-deoxy-D-ribose 5-phosphate.</text>
</comment>
<comment type="catalytic activity">
    <reaction evidence="1">
        <text>2-deoxy-D-ribose 5-phosphate = D-glyceraldehyde 3-phosphate + acetaldehyde</text>
        <dbReference type="Rhea" id="RHEA:12821"/>
        <dbReference type="ChEBI" id="CHEBI:15343"/>
        <dbReference type="ChEBI" id="CHEBI:59776"/>
        <dbReference type="ChEBI" id="CHEBI:62877"/>
        <dbReference type="EC" id="4.1.2.4"/>
    </reaction>
</comment>
<comment type="pathway">
    <text evidence="1">Carbohydrate degradation; 2-deoxy-D-ribose 1-phosphate degradation; D-glyceraldehyde 3-phosphate and acetaldehyde from 2-deoxy-alpha-D-ribose 1-phosphate: step 2/2.</text>
</comment>
<comment type="subcellular location">
    <subcellularLocation>
        <location evidence="1">Cytoplasm</location>
    </subcellularLocation>
</comment>
<comment type="similarity">
    <text evidence="1">Belongs to the DeoC/FbaB aldolase family. DeoC type 1 subfamily.</text>
</comment>
<accession>B5ZCA0</accession>
<feature type="chain" id="PRO_1000094866" description="Deoxyribose-phosphate aldolase">
    <location>
        <begin position="1"/>
        <end position="215"/>
    </location>
</feature>
<feature type="active site" description="Proton donor/acceptor" evidence="1">
    <location>
        <position position="90"/>
    </location>
</feature>
<feature type="active site" description="Schiff-base intermediate with acetaldehyde" evidence="1">
    <location>
        <position position="152"/>
    </location>
</feature>
<feature type="active site" description="Proton donor/acceptor" evidence="1">
    <location>
        <position position="181"/>
    </location>
</feature>
<evidence type="ECO:0000255" key="1">
    <source>
        <dbReference type="HAMAP-Rule" id="MF_00114"/>
    </source>
</evidence>